<dbReference type="EC" id="2.4.1.115"/>
<dbReference type="EMBL" id="X77461">
    <property type="protein sequence ID" value="CAA54611.1"/>
    <property type="molecule type" value="mRNA"/>
</dbReference>
<dbReference type="PIR" id="S41954">
    <property type="entry name" value="S41954"/>
</dbReference>
<dbReference type="SMR" id="Q40285"/>
<dbReference type="CAZy" id="GT1">
    <property type="family name" value="Glycosyltransferase Family 1"/>
</dbReference>
<dbReference type="UniPathway" id="UPA00009"/>
<dbReference type="GO" id="GO:0047213">
    <property type="term" value="F:anthocyanidin 3-O-glucosyltransferase activity"/>
    <property type="evidence" value="ECO:0007669"/>
    <property type="project" value="UniProtKB-EC"/>
</dbReference>
<dbReference type="GO" id="GO:0009718">
    <property type="term" value="P:anthocyanin-containing compound biosynthetic process"/>
    <property type="evidence" value="ECO:0007669"/>
    <property type="project" value="UniProtKB-UniPathway"/>
</dbReference>
<dbReference type="CDD" id="cd03784">
    <property type="entry name" value="GT1_Gtf-like"/>
    <property type="match status" value="1"/>
</dbReference>
<dbReference type="FunFam" id="3.40.50.2000:FF:000056">
    <property type="entry name" value="Glycosyltransferase"/>
    <property type="match status" value="1"/>
</dbReference>
<dbReference type="Gene3D" id="3.40.50.2000">
    <property type="entry name" value="Glycogen Phosphorylase B"/>
    <property type="match status" value="2"/>
</dbReference>
<dbReference type="InterPro" id="IPR050481">
    <property type="entry name" value="UDP-glycosyltransf_plant"/>
</dbReference>
<dbReference type="InterPro" id="IPR002213">
    <property type="entry name" value="UDP_glucos_trans"/>
</dbReference>
<dbReference type="InterPro" id="IPR035595">
    <property type="entry name" value="UDP_glycos_trans_CS"/>
</dbReference>
<dbReference type="PANTHER" id="PTHR48048">
    <property type="entry name" value="GLYCOSYLTRANSFERASE"/>
    <property type="match status" value="1"/>
</dbReference>
<dbReference type="PANTHER" id="PTHR48048:SF45">
    <property type="entry name" value="GLYCOSYLTRANSFERASE"/>
    <property type="match status" value="1"/>
</dbReference>
<dbReference type="Pfam" id="PF00201">
    <property type="entry name" value="UDPGT"/>
    <property type="match status" value="1"/>
</dbReference>
<dbReference type="SUPFAM" id="SSF53756">
    <property type="entry name" value="UDP-Glycosyltransferase/glycogen phosphorylase"/>
    <property type="match status" value="1"/>
</dbReference>
<dbReference type="PROSITE" id="PS00375">
    <property type="entry name" value="UDPGT"/>
    <property type="match status" value="1"/>
</dbReference>
<keyword id="KW-0328">Glycosyltransferase</keyword>
<keyword id="KW-0808">Transferase</keyword>
<reference key="1">
    <citation type="journal article" date="1994" name="DNA Seq.">
        <title>Multiple secondary plant product UDP-glucose glucosyltransferase genes expressed in cassava (Manihot esculenta Crantz) cotyledons.</title>
        <authorList>
            <person name="Hughes J."/>
            <person name="Hughes M.A."/>
        </authorList>
    </citation>
    <scope>NUCLEOTIDE SEQUENCE [MRNA]</scope>
    <source>
        <tissue>Cotyledon</tissue>
    </source>
</reference>
<proteinExistence type="evidence at transcript level"/>
<accession>Q40285</accession>
<organism>
    <name type="scientific">Manihot esculenta</name>
    <name type="common">Cassava</name>
    <name type="synonym">Jatropha manihot</name>
    <dbReference type="NCBI Taxonomy" id="3983"/>
    <lineage>
        <taxon>Eukaryota</taxon>
        <taxon>Viridiplantae</taxon>
        <taxon>Streptophyta</taxon>
        <taxon>Embryophyta</taxon>
        <taxon>Tracheophyta</taxon>
        <taxon>Spermatophyta</taxon>
        <taxon>Magnoliopsida</taxon>
        <taxon>eudicotyledons</taxon>
        <taxon>Gunneridae</taxon>
        <taxon>Pentapetalae</taxon>
        <taxon>rosids</taxon>
        <taxon>fabids</taxon>
        <taxon>Malpighiales</taxon>
        <taxon>Euphorbiaceae</taxon>
        <taxon>Crotonoideae</taxon>
        <taxon>Manihoteae</taxon>
        <taxon>Manihot</taxon>
    </lineage>
</organism>
<name>UFOG2_MANES</name>
<evidence type="ECO:0000250" key="1"/>
<evidence type="ECO:0000250" key="2">
    <source>
        <dbReference type="UniProtKB" id="A0A0A1HA03"/>
    </source>
</evidence>
<evidence type="ECO:0000250" key="3">
    <source>
        <dbReference type="UniProtKB" id="P51094"/>
    </source>
</evidence>
<evidence type="ECO:0000305" key="4"/>
<comment type="function">
    <text evidence="1">In the presence of other necessary color factors, this glycosylation reaction allows the accumulation of anthocyanin pigments.</text>
</comment>
<comment type="catalytic activity">
    <reaction>
        <text>an anthocyanidin + UDP-alpha-D-glucose + H(+) = an anthocyanidin 3-O-beta-D-glucoside + UDP</text>
        <dbReference type="Rhea" id="RHEA:20093"/>
        <dbReference type="ChEBI" id="CHEBI:15378"/>
        <dbReference type="ChEBI" id="CHEBI:16307"/>
        <dbReference type="ChEBI" id="CHEBI:58223"/>
        <dbReference type="ChEBI" id="CHEBI:58885"/>
        <dbReference type="ChEBI" id="CHEBI:143576"/>
        <dbReference type="EC" id="2.4.1.115"/>
    </reaction>
</comment>
<comment type="pathway">
    <text>Pigment biosynthesis; anthocyanin biosynthesis.</text>
</comment>
<comment type="tissue specificity">
    <text>Expressed in cotyledons, roots and leaves.</text>
</comment>
<comment type="developmental stage">
    <text>Maximum expression in cotyledons that just emerged from the seed coat. Low levels in hypocotyls and increasing levels in roots throughout this period of development.</text>
</comment>
<comment type="similarity">
    <text evidence="4">Belongs to the UDP-glycosyltransferase family.</text>
</comment>
<protein>
    <recommendedName>
        <fullName>Anthocyanidin 3-O-glucosyltransferase 2</fullName>
        <ecNumber>2.4.1.115</ecNumber>
    </recommendedName>
    <alternativeName>
        <fullName>Flavonol 3-O-glucosyltransferase 2</fullName>
    </alternativeName>
    <alternativeName>
        <fullName>UDP-glucose flavonoid 3-O-glucosyltransferase 2</fullName>
    </alternativeName>
</protein>
<sequence length="346" mass="38835">FCTPMMDLADEFGIPSYIFFASGGGFLGFMLYVQKIHDEENFNPIEFKDSDTELIVPSLVNPFPTRILPSSILNKERFGQLLAIAKKFRQAKGIIVNTFLELESRAIESFKVPPLYHVGPILDVKSDGRNTHPEIMQWLDDQPEGSVVFLCFGSMGSFSEDQLKEIAYALENSGHRFLWSIRRPPPPDKIASPTDYEDPRDVLPEGFLERTVAVGKVIGWAPQVAVLAHPAIGGFVSHCGWNSVLESLWFGVPIATWPMYAEQQFNAFEMVVELGLGVEIDMGYRKESGIIVNSDKIERAIRKLMENSDEKRKKVKEMREKSKMALIDGGSSFISLGDFIKDAMEG</sequence>
<gene>
    <name type="primary">GT2</name>
    <name type="synonym">UGT73A2</name>
</gene>
<feature type="chain" id="PRO_0000074144" description="Anthocyanidin 3-O-glucosyltransferase 2">
    <location>
        <begin position="1" status="less than"/>
        <end position="346"/>
    </location>
</feature>
<feature type="binding site" evidence="2">
    <location>
        <position position="221"/>
    </location>
    <ligand>
        <name>UDP-alpha-D-glucose</name>
        <dbReference type="ChEBI" id="CHEBI:58885"/>
    </ligand>
</feature>
<feature type="binding site" evidence="2">
    <location>
        <position position="223"/>
    </location>
    <ligand>
        <name>UDP-alpha-D-glucose</name>
        <dbReference type="ChEBI" id="CHEBI:58885"/>
    </ligand>
</feature>
<feature type="binding site" evidence="2">
    <location>
        <position position="238"/>
    </location>
    <ligand>
        <name>UDP-alpha-D-glucose</name>
        <dbReference type="ChEBI" id="CHEBI:58885"/>
    </ligand>
</feature>
<feature type="binding site" evidence="2">
    <location>
        <position position="241"/>
    </location>
    <ligand>
        <name>UDP-alpha-D-glucose</name>
        <dbReference type="ChEBI" id="CHEBI:58885"/>
    </ligand>
</feature>
<feature type="binding site" evidence="2">
    <location>
        <position position="242"/>
    </location>
    <ligand>
        <name>UDP-alpha-D-glucose</name>
        <dbReference type="ChEBI" id="CHEBI:58885"/>
    </ligand>
</feature>
<feature type="binding site" evidence="2">
    <location>
        <position position="243"/>
    </location>
    <ligand>
        <name>UDP-alpha-D-glucose</name>
        <dbReference type="ChEBI" id="CHEBI:58885"/>
    </ligand>
</feature>
<feature type="binding site" evidence="2">
    <location>
        <position position="246"/>
    </location>
    <ligand>
        <name>UDP-alpha-D-glucose</name>
        <dbReference type="ChEBI" id="CHEBI:58885"/>
    </ligand>
</feature>
<feature type="binding site" evidence="3">
    <location>
        <position position="261"/>
    </location>
    <ligand>
        <name>an anthocyanidin</name>
        <dbReference type="ChEBI" id="CHEBI:143576"/>
    </ligand>
</feature>
<feature type="binding site" evidence="2">
    <location>
        <position position="262"/>
    </location>
    <ligand>
        <name>UDP-alpha-D-glucose</name>
        <dbReference type="ChEBI" id="CHEBI:58885"/>
    </ligand>
</feature>
<feature type="binding site" evidence="2">
    <location>
        <position position="263"/>
    </location>
    <ligand>
        <name>UDP-alpha-D-glucose</name>
        <dbReference type="ChEBI" id="CHEBI:58885"/>
    </ligand>
</feature>
<feature type="non-terminal residue">
    <location>
        <position position="1"/>
    </location>
</feature>